<gene>
    <name evidence="11" type="primary">Defb42</name>
    <name evidence="5" type="synonym">Defb44</name>
</gene>
<comment type="function">
    <text evidence="2 4">Has bactericidal activity (By similarity). May play a role in the antimicrobial protection of sperm and urogenital tract epithelia (PubMed:16023745).</text>
</comment>
<comment type="subcellular location">
    <subcellularLocation>
        <location evidence="1">Secreted</location>
    </subcellularLocation>
</comment>
<comment type="tissue specificity">
    <text evidence="4">Epididymis-specific, with highest levels in the initial segment and distal caput.</text>
</comment>
<comment type="induction">
    <text evidence="4">By androgens.</text>
</comment>
<comment type="similarity">
    <text evidence="6">Belongs to the beta-defensin family.</text>
</comment>
<keyword id="KW-0044">Antibiotic</keyword>
<keyword id="KW-0929">Antimicrobial</keyword>
<keyword id="KW-0211">Defensin</keyword>
<keyword id="KW-1015">Disulfide bond</keyword>
<keyword id="KW-1185">Reference proteome</keyword>
<keyword id="KW-0964">Secreted</keyword>
<keyword id="KW-0732">Signal</keyword>
<feature type="signal peptide" evidence="3">
    <location>
        <begin position="1"/>
        <end position="21"/>
    </location>
</feature>
<feature type="chain" id="PRO_0000434510" description="Beta-defensin 42" evidence="6">
    <location>
        <begin position="22"/>
        <end position="75"/>
    </location>
</feature>
<feature type="disulfide bond" evidence="2">
    <location>
        <begin position="33"/>
        <end position="60"/>
    </location>
</feature>
<feature type="disulfide bond" evidence="2">
    <location>
        <begin position="40"/>
        <end position="54"/>
    </location>
</feature>
<feature type="disulfide bond" evidence="2">
    <location>
        <begin position="44"/>
        <end position="61"/>
    </location>
</feature>
<accession>Q8BVB5</accession>
<accession>Q4FZ54</accession>
<sequence>MNLRLSCLLFILVTSLPAGRCSIGNKGISFETCTAIEGLCFFGCKLGWVWIAYCNNIMSCCRKDTDFVLPQTKGI</sequence>
<protein>
    <recommendedName>
        <fullName evidence="11">Beta-defensin 42</fullName>
        <shortName evidence="6">BD-42</shortName>
        <shortName evidence="6">mBD-42</shortName>
    </recommendedName>
    <alternativeName>
        <fullName evidence="11">Defensin, beta 42</fullName>
    </alternativeName>
</protein>
<organism>
    <name type="scientific">Mus musculus</name>
    <name type="common">Mouse</name>
    <dbReference type="NCBI Taxonomy" id="10090"/>
    <lineage>
        <taxon>Eukaryota</taxon>
        <taxon>Metazoa</taxon>
        <taxon>Chordata</taxon>
        <taxon>Craniata</taxon>
        <taxon>Vertebrata</taxon>
        <taxon>Euteleostomi</taxon>
        <taxon>Mammalia</taxon>
        <taxon>Eutheria</taxon>
        <taxon>Euarchontoglires</taxon>
        <taxon>Glires</taxon>
        <taxon>Rodentia</taxon>
        <taxon>Myomorpha</taxon>
        <taxon>Muroidea</taxon>
        <taxon>Muridae</taxon>
        <taxon>Murinae</taxon>
        <taxon>Mus</taxon>
        <taxon>Mus</taxon>
    </lineage>
</organism>
<dbReference type="EMBL" id="DQ012046">
    <property type="protein sequence ID" value="AAY59782.1"/>
    <property type="molecule type" value="mRNA"/>
</dbReference>
<dbReference type="EMBL" id="AK079042">
    <property type="protein sequence ID" value="BAC37510.1"/>
    <property type="molecule type" value="mRNA"/>
</dbReference>
<dbReference type="EMBL" id="AC090659">
    <property type="status" value="NOT_ANNOTATED_CDS"/>
    <property type="molecule type" value="Genomic_DNA"/>
</dbReference>
<dbReference type="EMBL" id="CH466535">
    <property type="protein sequence ID" value="EDL36074.1"/>
    <property type="molecule type" value="Genomic_DNA"/>
</dbReference>
<dbReference type="EMBL" id="CH466535">
    <property type="protein sequence ID" value="EDL36075.1"/>
    <property type="molecule type" value="Genomic_DNA"/>
</dbReference>
<dbReference type="EMBL" id="BC146022">
    <property type="protein sequence ID" value="AAI46023.1"/>
    <property type="molecule type" value="mRNA"/>
</dbReference>
<dbReference type="EMBL" id="BC146024">
    <property type="protein sequence ID" value="AAI46025.1"/>
    <property type="molecule type" value="mRNA"/>
</dbReference>
<dbReference type="EMBL" id="BK005413">
    <property type="protein sequence ID" value="DAA05562.1"/>
    <property type="molecule type" value="mRNA"/>
</dbReference>
<dbReference type="CCDS" id="CCDS36948.1"/>
<dbReference type="RefSeq" id="NP_001030082.1">
    <property type="nucleotide sequence ID" value="NM_001034910.4"/>
</dbReference>
<dbReference type="RefSeq" id="NP_001399509.1">
    <property type="nucleotide sequence ID" value="NM_001412580.1"/>
</dbReference>
<dbReference type="FunCoup" id="Q8BVB5">
    <property type="interactions" value="3"/>
</dbReference>
<dbReference type="STRING" id="10090.ENSMUSP00000070629"/>
<dbReference type="PaxDb" id="10090-ENSMUSP00000070629"/>
<dbReference type="ProteomicsDB" id="279524"/>
<dbReference type="Antibodypedia" id="67428">
    <property type="antibodies" value="10 antibodies from 6 providers"/>
</dbReference>
<dbReference type="Ensembl" id="ENSMUST00000067990.8">
    <property type="protein sequence ID" value="ENSMUSP00000070629.2"/>
    <property type="gene ID" value="ENSMUSG00000054763.10"/>
</dbReference>
<dbReference type="Ensembl" id="ENSMUST00000111203.2">
    <property type="protein sequence ID" value="ENSMUSP00000106834.2"/>
    <property type="gene ID" value="ENSMUSG00000054763.10"/>
</dbReference>
<dbReference type="GeneID" id="619548"/>
<dbReference type="KEGG" id="mmu:619548"/>
<dbReference type="UCSC" id="uc007uhf.2">
    <property type="organism name" value="mouse"/>
</dbReference>
<dbReference type="AGR" id="MGI:3033850"/>
<dbReference type="CTD" id="619548"/>
<dbReference type="MGI" id="MGI:3033850">
    <property type="gene designation" value="Defb42"/>
</dbReference>
<dbReference type="VEuPathDB" id="HostDB:ENSMUSG00000054763"/>
<dbReference type="eggNOG" id="ENOG502R7G8">
    <property type="taxonomic scope" value="Eukaryota"/>
</dbReference>
<dbReference type="GeneTree" id="ENSGT00390000001862"/>
<dbReference type="HOGENOM" id="CLU_198474_0_0_1"/>
<dbReference type="InParanoid" id="Q8BVB5"/>
<dbReference type="OMA" id="WVAFCHN"/>
<dbReference type="OrthoDB" id="9829371at2759"/>
<dbReference type="PhylomeDB" id="Q8BVB5"/>
<dbReference type="TreeFam" id="TF343350"/>
<dbReference type="Reactome" id="R-MMU-1461957">
    <property type="pathway name" value="Beta defensins"/>
</dbReference>
<dbReference type="Reactome" id="R-MMU-1461973">
    <property type="pathway name" value="Defensins"/>
</dbReference>
<dbReference type="BioGRID-ORCS" id="619548">
    <property type="hits" value="1 hit in 78 CRISPR screens"/>
</dbReference>
<dbReference type="PRO" id="PR:Q8BVB5"/>
<dbReference type="Proteomes" id="UP000000589">
    <property type="component" value="Chromosome 14"/>
</dbReference>
<dbReference type="RNAct" id="Q8BVB5">
    <property type="molecule type" value="protein"/>
</dbReference>
<dbReference type="Bgee" id="ENSMUSG00000054763">
    <property type="expression patterns" value="Expressed in seminal vesicle and 35 other cell types or tissues"/>
</dbReference>
<dbReference type="ExpressionAtlas" id="Q8BVB5">
    <property type="expression patterns" value="baseline and differential"/>
</dbReference>
<dbReference type="GO" id="GO:0005576">
    <property type="term" value="C:extracellular region"/>
    <property type="evidence" value="ECO:0007669"/>
    <property type="project" value="UniProtKB-SubCell"/>
</dbReference>
<dbReference type="GO" id="GO:0001530">
    <property type="term" value="F:lipopolysaccharide binding"/>
    <property type="evidence" value="ECO:0007669"/>
    <property type="project" value="Ensembl"/>
</dbReference>
<dbReference type="GO" id="GO:0140367">
    <property type="term" value="P:antibacterial innate immune response"/>
    <property type="evidence" value="ECO:0007669"/>
    <property type="project" value="Ensembl"/>
</dbReference>
<dbReference type="GO" id="GO:0061760">
    <property type="term" value="P:antifungal innate immune response"/>
    <property type="evidence" value="ECO:0007669"/>
    <property type="project" value="Ensembl"/>
</dbReference>
<dbReference type="GO" id="GO:0050829">
    <property type="term" value="P:defense response to Gram-negative bacterium"/>
    <property type="evidence" value="ECO:0007669"/>
    <property type="project" value="Ensembl"/>
</dbReference>
<dbReference type="GO" id="GO:0050830">
    <property type="term" value="P:defense response to Gram-positive bacterium"/>
    <property type="evidence" value="ECO:0007669"/>
    <property type="project" value="Ensembl"/>
</dbReference>
<dbReference type="InterPro" id="IPR035307">
    <property type="entry name" value="DEFB136/42"/>
</dbReference>
<dbReference type="PANTHER" id="PTHR39413">
    <property type="entry name" value="BETA-DEFENSIN 136"/>
    <property type="match status" value="1"/>
</dbReference>
<dbReference type="PANTHER" id="PTHR39413:SF1">
    <property type="entry name" value="DEFENSIN BETA 136"/>
    <property type="match status" value="1"/>
</dbReference>
<dbReference type="Pfam" id="PF17333">
    <property type="entry name" value="DEFB136"/>
    <property type="match status" value="1"/>
</dbReference>
<proteinExistence type="evidence at transcript level"/>
<name>DFB42_MOUSE</name>
<evidence type="ECO:0000250" key="1">
    <source>
        <dbReference type="UniProtKB" id="P60022"/>
    </source>
</evidence>
<evidence type="ECO:0000250" key="2">
    <source>
        <dbReference type="UniProtKB" id="P81534"/>
    </source>
</evidence>
<evidence type="ECO:0000255" key="3"/>
<evidence type="ECO:0000269" key="4">
    <source>
    </source>
</evidence>
<evidence type="ECO:0000303" key="5">
    <source>
    </source>
</evidence>
<evidence type="ECO:0000305" key="6"/>
<evidence type="ECO:0000312" key="7">
    <source>
        <dbReference type="EMBL" id="AAI46023.1"/>
    </source>
</evidence>
<evidence type="ECO:0000312" key="8">
    <source>
        <dbReference type="EMBL" id="AAY59782.1"/>
    </source>
</evidence>
<evidence type="ECO:0000312" key="9">
    <source>
        <dbReference type="EMBL" id="BAC37510.1"/>
    </source>
</evidence>
<evidence type="ECO:0000312" key="10">
    <source>
        <dbReference type="EMBL" id="DAA05562.1"/>
    </source>
</evidence>
<evidence type="ECO:0000312" key="11">
    <source>
        <dbReference type="MGI" id="MGI:3033850"/>
    </source>
</evidence>
<reference evidence="8" key="1">
    <citation type="journal article" date="2005" name="Physiol. Genomics">
        <title>Cross-species analysis of the mammalian beta-defensin gene family: presence of syntenic gene clusters and preferential expression in the male reproductive tract.</title>
        <authorList>
            <person name="Patil A.A."/>
            <person name="Cai Y."/>
            <person name="Sang Y."/>
            <person name="Blecha F."/>
            <person name="Zhang G."/>
        </authorList>
    </citation>
    <scope>NUCLEOTIDE SEQUENCE [MRNA]</scope>
</reference>
<reference evidence="9" key="2">
    <citation type="journal article" date="2005" name="Science">
        <title>The transcriptional landscape of the mammalian genome.</title>
        <authorList>
            <person name="Carninci P."/>
            <person name="Kasukawa T."/>
            <person name="Katayama S."/>
            <person name="Gough J."/>
            <person name="Frith M.C."/>
            <person name="Maeda N."/>
            <person name="Oyama R."/>
            <person name="Ravasi T."/>
            <person name="Lenhard B."/>
            <person name="Wells C."/>
            <person name="Kodzius R."/>
            <person name="Shimokawa K."/>
            <person name="Bajic V.B."/>
            <person name="Brenner S.E."/>
            <person name="Batalov S."/>
            <person name="Forrest A.R."/>
            <person name="Zavolan M."/>
            <person name="Davis M.J."/>
            <person name="Wilming L.G."/>
            <person name="Aidinis V."/>
            <person name="Allen J.E."/>
            <person name="Ambesi-Impiombato A."/>
            <person name="Apweiler R."/>
            <person name="Aturaliya R.N."/>
            <person name="Bailey T.L."/>
            <person name="Bansal M."/>
            <person name="Baxter L."/>
            <person name="Beisel K.W."/>
            <person name="Bersano T."/>
            <person name="Bono H."/>
            <person name="Chalk A.M."/>
            <person name="Chiu K.P."/>
            <person name="Choudhary V."/>
            <person name="Christoffels A."/>
            <person name="Clutterbuck D.R."/>
            <person name="Crowe M.L."/>
            <person name="Dalla E."/>
            <person name="Dalrymple B.P."/>
            <person name="de Bono B."/>
            <person name="Della Gatta G."/>
            <person name="di Bernardo D."/>
            <person name="Down T."/>
            <person name="Engstrom P."/>
            <person name="Fagiolini M."/>
            <person name="Faulkner G."/>
            <person name="Fletcher C.F."/>
            <person name="Fukushima T."/>
            <person name="Furuno M."/>
            <person name="Futaki S."/>
            <person name="Gariboldi M."/>
            <person name="Georgii-Hemming P."/>
            <person name="Gingeras T.R."/>
            <person name="Gojobori T."/>
            <person name="Green R.E."/>
            <person name="Gustincich S."/>
            <person name="Harbers M."/>
            <person name="Hayashi Y."/>
            <person name="Hensch T.K."/>
            <person name="Hirokawa N."/>
            <person name="Hill D."/>
            <person name="Huminiecki L."/>
            <person name="Iacono M."/>
            <person name="Ikeo K."/>
            <person name="Iwama A."/>
            <person name="Ishikawa T."/>
            <person name="Jakt M."/>
            <person name="Kanapin A."/>
            <person name="Katoh M."/>
            <person name="Kawasawa Y."/>
            <person name="Kelso J."/>
            <person name="Kitamura H."/>
            <person name="Kitano H."/>
            <person name="Kollias G."/>
            <person name="Krishnan S.P."/>
            <person name="Kruger A."/>
            <person name="Kummerfeld S.K."/>
            <person name="Kurochkin I.V."/>
            <person name="Lareau L.F."/>
            <person name="Lazarevic D."/>
            <person name="Lipovich L."/>
            <person name="Liu J."/>
            <person name="Liuni S."/>
            <person name="McWilliam S."/>
            <person name="Madan Babu M."/>
            <person name="Madera M."/>
            <person name="Marchionni L."/>
            <person name="Matsuda H."/>
            <person name="Matsuzawa S."/>
            <person name="Miki H."/>
            <person name="Mignone F."/>
            <person name="Miyake S."/>
            <person name="Morris K."/>
            <person name="Mottagui-Tabar S."/>
            <person name="Mulder N."/>
            <person name="Nakano N."/>
            <person name="Nakauchi H."/>
            <person name="Ng P."/>
            <person name="Nilsson R."/>
            <person name="Nishiguchi S."/>
            <person name="Nishikawa S."/>
            <person name="Nori F."/>
            <person name="Ohara O."/>
            <person name="Okazaki Y."/>
            <person name="Orlando V."/>
            <person name="Pang K.C."/>
            <person name="Pavan W.J."/>
            <person name="Pavesi G."/>
            <person name="Pesole G."/>
            <person name="Petrovsky N."/>
            <person name="Piazza S."/>
            <person name="Reed J."/>
            <person name="Reid J.F."/>
            <person name="Ring B.Z."/>
            <person name="Ringwald M."/>
            <person name="Rost B."/>
            <person name="Ruan Y."/>
            <person name="Salzberg S.L."/>
            <person name="Sandelin A."/>
            <person name="Schneider C."/>
            <person name="Schoenbach C."/>
            <person name="Sekiguchi K."/>
            <person name="Semple C.A."/>
            <person name="Seno S."/>
            <person name="Sessa L."/>
            <person name="Sheng Y."/>
            <person name="Shibata Y."/>
            <person name="Shimada H."/>
            <person name="Shimada K."/>
            <person name="Silva D."/>
            <person name="Sinclair B."/>
            <person name="Sperling S."/>
            <person name="Stupka E."/>
            <person name="Sugiura K."/>
            <person name="Sultana R."/>
            <person name="Takenaka Y."/>
            <person name="Taki K."/>
            <person name="Tammoja K."/>
            <person name="Tan S.L."/>
            <person name="Tang S."/>
            <person name="Taylor M.S."/>
            <person name="Tegner J."/>
            <person name="Teichmann S.A."/>
            <person name="Ueda H.R."/>
            <person name="van Nimwegen E."/>
            <person name="Verardo R."/>
            <person name="Wei C.L."/>
            <person name="Yagi K."/>
            <person name="Yamanishi H."/>
            <person name="Zabarovsky E."/>
            <person name="Zhu S."/>
            <person name="Zimmer A."/>
            <person name="Hide W."/>
            <person name="Bult C."/>
            <person name="Grimmond S.M."/>
            <person name="Teasdale R.D."/>
            <person name="Liu E.T."/>
            <person name="Brusic V."/>
            <person name="Quackenbush J."/>
            <person name="Wahlestedt C."/>
            <person name="Mattick J.S."/>
            <person name="Hume D.A."/>
            <person name="Kai C."/>
            <person name="Sasaki D."/>
            <person name="Tomaru Y."/>
            <person name="Fukuda S."/>
            <person name="Kanamori-Katayama M."/>
            <person name="Suzuki M."/>
            <person name="Aoki J."/>
            <person name="Arakawa T."/>
            <person name="Iida J."/>
            <person name="Imamura K."/>
            <person name="Itoh M."/>
            <person name="Kato T."/>
            <person name="Kawaji H."/>
            <person name="Kawagashira N."/>
            <person name="Kawashima T."/>
            <person name="Kojima M."/>
            <person name="Kondo S."/>
            <person name="Konno H."/>
            <person name="Nakano K."/>
            <person name="Ninomiya N."/>
            <person name="Nishio T."/>
            <person name="Okada M."/>
            <person name="Plessy C."/>
            <person name="Shibata K."/>
            <person name="Shiraki T."/>
            <person name="Suzuki S."/>
            <person name="Tagami M."/>
            <person name="Waki K."/>
            <person name="Watahiki A."/>
            <person name="Okamura-Oho Y."/>
            <person name="Suzuki H."/>
            <person name="Kawai J."/>
            <person name="Hayashizaki Y."/>
        </authorList>
    </citation>
    <scope>NUCLEOTIDE SEQUENCE [LARGE SCALE MRNA]</scope>
    <source>
        <strain>C57BL/6J</strain>
        <tissue>Epididymis</tissue>
    </source>
</reference>
<reference evidence="6" key="3">
    <citation type="journal article" date="2009" name="PLoS Biol.">
        <title>Lineage-specific biology revealed by a finished genome assembly of the mouse.</title>
        <authorList>
            <person name="Church D.M."/>
            <person name="Goodstadt L."/>
            <person name="Hillier L.W."/>
            <person name="Zody M.C."/>
            <person name="Goldstein S."/>
            <person name="She X."/>
            <person name="Bult C.J."/>
            <person name="Agarwala R."/>
            <person name="Cherry J.L."/>
            <person name="DiCuccio M."/>
            <person name="Hlavina W."/>
            <person name="Kapustin Y."/>
            <person name="Meric P."/>
            <person name="Maglott D."/>
            <person name="Birtle Z."/>
            <person name="Marques A.C."/>
            <person name="Graves T."/>
            <person name="Zhou S."/>
            <person name="Teague B."/>
            <person name="Potamousis K."/>
            <person name="Churas C."/>
            <person name="Place M."/>
            <person name="Herschleb J."/>
            <person name="Runnheim R."/>
            <person name="Forrest D."/>
            <person name="Amos-Landgraf J."/>
            <person name="Schwartz D.C."/>
            <person name="Cheng Z."/>
            <person name="Lindblad-Toh K."/>
            <person name="Eichler E.E."/>
            <person name="Ponting C.P."/>
        </authorList>
    </citation>
    <scope>NUCLEOTIDE SEQUENCE [LARGE SCALE GENOMIC DNA]</scope>
    <source>
        <strain>C57BL/6J</strain>
    </source>
</reference>
<reference key="4">
    <citation type="submission" date="2005-09" db="EMBL/GenBank/DDBJ databases">
        <authorList>
            <person name="Mural R.J."/>
            <person name="Adams M.D."/>
            <person name="Myers E.W."/>
            <person name="Smith H.O."/>
            <person name="Venter J.C."/>
        </authorList>
    </citation>
    <scope>NUCLEOTIDE SEQUENCE [LARGE SCALE GENOMIC DNA]</scope>
</reference>
<reference evidence="7" key="5">
    <citation type="journal article" date="2004" name="Genome Res.">
        <title>The status, quality, and expansion of the NIH full-length cDNA project: the Mammalian Gene Collection (MGC).</title>
        <authorList>
            <consortium name="The MGC Project Team"/>
        </authorList>
    </citation>
    <scope>NUCLEOTIDE SEQUENCE [LARGE SCALE MRNA]</scope>
</reference>
<reference evidence="10" key="6">
    <citation type="journal article" date="2005" name="Biochim. Biophys. Acta">
        <title>Discovery and characterization of new epididymis-specific beta-defensins in mice.</title>
        <authorList>
            <person name="Jalkanen J."/>
            <person name="Huhtaniemi I."/>
            <person name="Poutanen M."/>
        </authorList>
    </citation>
    <scope>IDENTIFICATION</scope>
    <scope>FUNCTION</scope>
    <scope>TISSUE SPECIFICITY</scope>
    <scope>INDUCTION</scope>
    <source>
        <strain evidence="10">C57BL/6J</strain>
        <tissue evidence="10">Epididymis</tissue>
    </source>
</reference>